<dbReference type="EMBL" id="CP000267">
    <property type="protein sequence ID" value="ABD69457.1"/>
    <property type="molecule type" value="Genomic_DNA"/>
</dbReference>
<dbReference type="RefSeq" id="WP_011464025.1">
    <property type="nucleotide sequence ID" value="NC_007908.1"/>
</dbReference>
<dbReference type="SMR" id="Q21XP6"/>
<dbReference type="STRING" id="338969.Rfer_1728"/>
<dbReference type="KEGG" id="rfr:Rfer_1728"/>
<dbReference type="eggNOG" id="COG0333">
    <property type="taxonomic scope" value="Bacteria"/>
</dbReference>
<dbReference type="HOGENOM" id="CLU_129084_2_1_4"/>
<dbReference type="OrthoDB" id="9801927at2"/>
<dbReference type="Proteomes" id="UP000008332">
    <property type="component" value="Chromosome"/>
</dbReference>
<dbReference type="GO" id="GO:0015934">
    <property type="term" value="C:large ribosomal subunit"/>
    <property type="evidence" value="ECO:0007669"/>
    <property type="project" value="InterPro"/>
</dbReference>
<dbReference type="GO" id="GO:0003735">
    <property type="term" value="F:structural constituent of ribosome"/>
    <property type="evidence" value="ECO:0007669"/>
    <property type="project" value="InterPro"/>
</dbReference>
<dbReference type="GO" id="GO:0006412">
    <property type="term" value="P:translation"/>
    <property type="evidence" value="ECO:0007669"/>
    <property type="project" value="UniProtKB-UniRule"/>
</dbReference>
<dbReference type="HAMAP" id="MF_00340">
    <property type="entry name" value="Ribosomal_bL32"/>
    <property type="match status" value="1"/>
</dbReference>
<dbReference type="InterPro" id="IPR002677">
    <property type="entry name" value="Ribosomal_bL32"/>
</dbReference>
<dbReference type="InterPro" id="IPR044957">
    <property type="entry name" value="Ribosomal_bL32_bact"/>
</dbReference>
<dbReference type="InterPro" id="IPR011332">
    <property type="entry name" value="Ribosomal_zn-bd"/>
</dbReference>
<dbReference type="NCBIfam" id="TIGR01031">
    <property type="entry name" value="rpmF_bact"/>
    <property type="match status" value="1"/>
</dbReference>
<dbReference type="PANTHER" id="PTHR35534">
    <property type="entry name" value="50S RIBOSOMAL PROTEIN L32"/>
    <property type="match status" value="1"/>
</dbReference>
<dbReference type="PANTHER" id="PTHR35534:SF1">
    <property type="entry name" value="LARGE RIBOSOMAL SUBUNIT PROTEIN BL32"/>
    <property type="match status" value="1"/>
</dbReference>
<dbReference type="Pfam" id="PF01783">
    <property type="entry name" value="Ribosomal_L32p"/>
    <property type="match status" value="1"/>
</dbReference>
<dbReference type="SUPFAM" id="SSF57829">
    <property type="entry name" value="Zn-binding ribosomal proteins"/>
    <property type="match status" value="1"/>
</dbReference>
<keyword id="KW-1185">Reference proteome</keyword>
<keyword id="KW-0687">Ribonucleoprotein</keyword>
<keyword id="KW-0689">Ribosomal protein</keyword>
<proteinExistence type="inferred from homology"/>
<feature type="chain" id="PRO_0000296545" description="Large ribosomal subunit protein bL32">
    <location>
        <begin position="1"/>
        <end position="60"/>
    </location>
</feature>
<feature type="region of interest" description="Disordered" evidence="2">
    <location>
        <begin position="1"/>
        <end position="21"/>
    </location>
</feature>
<feature type="compositionally biased region" description="Basic residues" evidence="2">
    <location>
        <begin position="9"/>
        <end position="19"/>
    </location>
</feature>
<accession>Q21XP6</accession>
<gene>
    <name evidence="1" type="primary">rpmF</name>
    <name type="ordered locus">Rfer_1728</name>
</gene>
<evidence type="ECO:0000255" key="1">
    <source>
        <dbReference type="HAMAP-Rule" id="MF_00340"/>
    </source>
</evidence>
<evidence type="ECO:0000256" key="2">
    <source>
        <dbReference type="SAM" id="MobiDB-lite"/>
    </source>
</evidence>
<evidence type="ECO:0000305" key="3"/>
<sequence length="60" mass="6646">MAVQQNKKSPSKRGMHRAHNALVVPGIAVESTTGETHLRHHISPNGFYRGRQVLKTKSEA</sequence>
<organism>
    <name type="scientific">Albidiferax ferrireducens (strain ATCC BAA-621 / DSM 15236 / T118)</name>
    <name type="common">Rhodoferax ferrireducens</name>
    <dbReference type="NCBI Taxonomy" id="338969"/>
    <lineage>
        <taxon>Bacteria</taxon>
        <taxon>Pseudomonadati</taxon>
        <taxon>Pseudomonadota</taxon>
        <taxon>Betaproteobacteria</taxon>
        <taxon>Burkholderiales</taxon>
        <taxon>Comamonadaceae</taxon>
        <taxon>Rhodoferax</taxon>
    </lineage>
</organism>
<protein>
    <recommendedName>
        <fullName evidence="1">Large ribosomal subunit protein bL32</fullName>
    </recommendedName>
    <alternativeName>
        <fullName evidence="3">50S ribosomal protein L32</fullName>
    </alternativeName>
</protein>
<reference key="1">
    <citation type="submission" date="2006-02" db="EMBL/GenBank/DDBJ databases">
        <title>Complete sequence of chromosome of Rhodoferax ferrireducens DSM 15236.</title>
        <authorList>
            <person name="Copeland A."/>
            <person name="Lucas S."/>
            <person name="Lapidus A."/>
            <person name="Barry K."/>
            <person name="Detter J.C."/>
            <person name="Glavina del Rio T."/>
            <person name="Hammon N."/>
            <person name="Israni S."/>
            <person name="Pitluck S."/>
            <person name="Brettin T."/>
            <person name="Bruce D."/>
            <person name="Han C."/>
            <person name="Tapia R."/>
            <person name="Gilna P."/>
            <person name="Kiss H."/>
            <person name="Schmutz J."/>
            <person name="Larimer F."/>
            <person name="Land M."/>
            <person name="Kyrpides N."/>
            <person name="Ivanova N."/>
            <person name="Richardson P."/>
        </authorList>
    </citation>
    <scope>NUCLEOTIDE SEQUENCE [LARGE SCALE GENOMIC DNA]</scope>
    <source>
        <strain>ATCC BAA-621 / DSM 15236 / T118</strain>
    </source>
</reference>
<name>RL32_ALBFT</name>
<comment type="similarity">
    <text evidence="1">Belongs to the bacterial ribosomal protein bL32 family.</text>
</comment>